<proteinExistence type="inferred from homology"/>
<name>PAN1_DEBHA</name>
<comment type="function">
    <text evidence="1">Component of the PAN1 actin cytoskeleton-regulatory complex required for the internalization of endosomes during actin-coupled endocytosis. The complex links the site of endocytosis to the cell membrane-associated actin cytoskeleton. Mediates uptake of external molecules and vacuolar degradation of plasma membrane proteins. Plays a role in the proper organization of the cell membrane-associated actin cytoskeleton and promotes its destabilization (By similarity).</text>
</comment>
<comment type="subunit">
    <text evidence="1">Component of the PAN1 actin cytoskeleton-regulatory complex.</text>
</comment>
<comment type="subcellular location">
    <subcellularLocation>
        <location evidence="1">Cell membrane</location>
        <topology evidence="1">Peripheral membrane protein</topology>
        <orientation evidence="1">Cytoplasmic side</orientation>
    </subcellularLocation>
    <subcellularLocation>
        <location evidence="1">Endosome membrane</location>
        <topology evidence="1">Peripheral membrane protein</topology>
        <orientation evidence="1">Cytoplasmic side</orientation>
    </subcellularLocation>
    <subcellularLocation>
        <location evidence="1">Cytoplasm</location>
        <location evidence="1">Cytoskeleton</location>
        <location evidence="1">Actin patch</location>
    </subcellularLocation>
    <text evidence="1">Cytoplasmic and cortical actin patches.</text>
</comment>
<comment type="similarity">
    <text evidence="7">Belongs to the PAN1 family.</text>
</comment>
<reference key="1">
    <citation type="journal article" date="2004" name="Nature">
        <title>Genome evolution in yeasts.</title>
        <authorList>
            <person name="Dujon B."/>
            <person name="Sherman D."/>
            <person name="Fischer G."/>
            <person name="Durrens P."/>
            <person name="Casaregola S."/>
            <person name="Lafontaine I."/>
            <person name="de Montigny J."/>
            <person name="Marck C."/>
            <person name="Neuveglise C."/>
            <person name="Talla E."/>
            <person name="Goffard N."/>
            <person name="Frangeul L."/>
            <person name="Aigle M."/>
            <person name="Anthouard V."/>
            <person name="Babour A."/>
            <person name="Barbe V."/>
            <person name="Barnay S."/>
            <person name="Blanchin S."/>
            <person name="Beckerich J.-M."/>
            <person name="Beyne E."/>
            <person name="Bleykasten C."/>
            <person name="Boisrame A."/>
            <person name="Boyer J."/>
            <person name="Cattolico L."/>
            <person name="Confanioleri F."/>
            <person name="de Daruvar A."/>
            <person name="Despons L."/>
            <person name="Fabre E."/>
            <person name="Fairhead C."/>
            <person name="Ferry-Dumazet H."/>
            <person name="Groppi A."/>
            <person name="Hantraye F."/>
            <person name="Hennequin C."/>
            <person name="Jauniaux N."/>
            <person name="Joyet P."/>
            <person name="Kachouri R."/>
            <person name="Kerrest A."/>
            <person name="Koszul R."/>
            <person name="Lemaire M."/>
            <person name="Lesur I."/>
            <person name="Ma L."/>
            <person name="Muller H."/>
            <person name="Nicaud J.-M."/>
            <person name="Nikolski M."/>
            <person name="Oztas S."/>
            <person name="Ozier-Kalogeropoulos O."/>
            <person name="Pellenz S."/>
            <person name="Potier S."/>
            <person name="Richard G.-F."/>
            <person name="Straub M.-L."/>
            <person name="Suleau A."/>
            <person name="Swennen D."/>
            <person name="Tekaia F."/>
            <person name="Wesolowski-Louvel M."/>
            <person name="Westhof E."/>
            <person name="Wirth B."/>
            <person name="Zeniou-Meyer M."/>
            <person name="Zivanovic Y."/>
            <person name="Bolotin-Fukuhara M."/>
            <person name="Thierry A."/>
            <person name="Bouchier C."/>
            <person name="Caudron B."/>
            <person name="Scarpelli C."/>
            <person name="Gaillardin C."/>
            <person name="Weissenbach J."/>
            <person name="Wincker P."/>
            <person name="Souciet J.-L."/>
        </authorList>
    </citation>
    <scope>NUCLEOTIDE SEQUENCE [LARGE SCALE GENOMIC DNA]</scope>
    <source>
        <strain>ATCC 36239 / CBS 767 / BCRC 21394 / JCM 1990 / NBRC 0083 / IGC 2968</strain>
    </source>
</reference>
<accession>Q6BNL1</accession>
<evidence type="ECO:0000250" key="1"/>
<evidence type="ECO:0000255" key="2"/>
<evidence type="ECO:0000255" key="3">
    <source>
        <dbReference type="PROSITE-ProRule" id="PRU00077"/>
    </source>
</evidence>
<evidence type="ECO:0000255" key="4">
    <source>
        <dbReference type="PROSITE-ProRule" id="PRU00406"/>
    </source>
</evidence>
<evidence type="ECO:0000255" key="5">
    <source>
        <dbReference type="PROSITE-ProRule" id="PRU00448"/>
    </source>
</evidence>
<evidence type="ECO:0000256" key="6">
    <source>
        <dbReference type="SAM" id="MobiDB-lite"/>
    </source>
</evidence>
<evidence type="ECO:0000305" key="7"/>
<protein>
    <recommendedName>
        <fullName>Actin cytoskeleton-regulatory complex protein PAN1</fullName>
    </recommendedName>
</protein>
<dbReference type="EMBL" id="CR382137">
    <property type="protein sequence ID" value="CAG88482.2"/>
    <property type="molecule type" value="Genomic_DNA"/>
</dbReference>
<dbReference type="RefSeq" id="XP_460209.2">
    <property type="nucleotide sequence ID" value="XM_460209.1"/>
</dbReference>
<dbReference type="SMR" id="Q6BNL1"/>
<dbReference type="FunCoup" id="Q6BNL1">
    <property type="interactions" value="69"/>
</dbReference>
<dbReference type="STRING" id="284592.Q6BNL1"/>
<dbReference type="GeneID" id="2902075"/>
<dbReference type="KEGG" id="dha:DEHA2E20856g"/>
<dbReference type="VEuPathDB" id="FungiDB:DEHA2E20856g"/>
<dbReference type="eggNOG" id="KOG0998">
    <property type="taxonomic scope" value="Eukaryota"/>
</dbReference>
<dbReference type="HOGENOM" id="CLU_001619_0_0_1"/>
<dbReference type="InParanoid" id="Q6BNL1"/>
<dbReference type="OMA" id="GMPGQWG"/>
<dbReference type="OrthoDB" id="2015333at2759"/>
<dbReference type="Proteomes" id="UP000000599">
    <property type="component" value="Chromosome E"/>
</dbReference>
<dbReference type="GO" id="GO:0030479">
    <property type="term" value="C:actin cortical patch"/>
    <property type="evidence" value="ECO:0007669"/>
    <property type="project" value="UniProtKB-SubCell"/>
</dbReference>
<dbReference type="GO" id="GO:0010008">
    <property type="term" value="C:endosome membrane"/>
    <property type="evidence" value="ECO:0007669"/>
    <property type="project" value="UniProtKB-SubCell"/>
</dbReference>
<dbReference type="GO" id="GO:0005886">
    <property type="term" value="C:plasma membrane"/>
    <property type="evidence" value="ECO:0007669"/>
    <property type="project" value="UniProtKB-SubCell"/>
</dbReference>
<dbReference type="GO" id="GO:0003779">
    <property type="term" value="F:actin binding"/>
    <property type="evidence" value="ECO:0007669"/>
    <property type="project" value="UniProtKB-KW"/>
</dbReference>
<dbReference type="GO" id="GO:0005509">
    <property type="term" value="F:calcium ion binding"/>
    <property type="evidence" value="ECO:0007669"/>
    <property type="project" value="InterPro"/>
</dbReference>
<dbReference type="GO" id="GO:0006897">
    <property type="term" value="P:endocytosis"/>
    <property type="evidence" value="ECO:0007669"/>
    <property type="project" value="UniProtKB-KW"/>
</dbReference>
<dbReference type="GO" id="GO:0016197">
    <property type="term" value="P:endosomal transport"/>
    <property type="evidence" value="ECO:0007669"/>
    <property type="project" value="TreeGrafter"/>
</dbReference>
<dbReference type="CDD" id="cd00052">
    <property type="entry name" value="EH"/>
    <property type="match status" value="2"/>
</dbReference>
<dbReference type="FunFam" id="1.10.238.10:FF:000349">
    <property type="entry name" value="Actin cytoskeleton-regulatory complex protein PAN1"/>
    <property type="match status" value="1"/>
</dbReference>
<dbReference type="Gene3D" id="1.10.238.10">
    <property type="entry name" value="EF-hand"/>
    <property type="match status" value="2"/>
</dbReference>
<dbReference type="InterPro" id="IPR013182">
    <property type="entry name" value="DUF1720"/>
</dbReference>
<dbReference type="InterPro" id="IPR011992">
    <property type="entry name" value="EF-hand-dom_pair"/>
</dbReference>
<dbReference type="InterPro" id="IPR002048">
    <property type="entry name" value="EF_hand_dom"/>
</dbReference>
<dbReference type="InterPro" id="IPR000261">
    <property type="entry name" value="EH_dom"/>
</dbReference>
<dbReference type="InterPro" id="IPR003124">
    <property type="entry name" value="WH2_dom"/>
</dbReference>
<dbReference type="PANTHER" id="PTHR11216:SF173">
    <property type="entry name" value="ACTIN CYTOSKELETON-REGULATORY COMPLEX PROTEIN PAN1"/>
    <property type="match status" value="1"/>
</dbReference>
<dbReference type="PANTHER" id="PTHR11216">
    <property type="entry name" value="EH DOMAIN"/>
    <property type="match status" value="1"/>
</dbReference>
<dbReference type="Pfam" id="PF08226">
    <property type="entry name" value="DUF1720"/>
    <property type="match status" value="3"/>
</dbReference>
<dbReference type="Pfam" id="PF12763">
    <property type="entry name" value="EH"/>
    <property type="match status" value="2"/>
</dbReference>
<dbReference type="PRINTS" id="PR01217">
    <property type="entry name" value="PRICHEXTENSN"/>
</dbReference>
<dbReference type="SMART" id="SM00054">
    <property type="entry name" value="EFh"/>
    <property type="match status" value="2"/>
</dbReference>
<dbReference type="SMART" id="SM00027">
    <property type="entry name" value="EH"/>
    <property type="match status" value="2"/>
</dbReference>
<dbReference type="SUPFAM" id="SSF47473">
    <property type="entry name" value="EF-hand"/>
    <property type="match status" value="2"/>
</dbReference>
<dbReference type="PROSITE" id="PS50222">
    <property type="entry name" value="EF_HAND_2"/>
    <property type="match status" value="2"/>
</dbReference>
<dbReference type="PROSITE" id="PS50031">
    <property type="entry name" value="EH"/>
    <property type="match status" value="2"/>
</dbReference>
<dbReference type="PROSITE" id="PS51082">
    <property type="entry name" value="WH2"/>
    <property type="match status" value="1"/>
</dbReference>
<keyword id="KW-0009">Actin-binding</keyword>
<keyword id="KW-1003">Cell membrane</keyword>
<keyword id="KW-0175">Coiled coil</keyword>
<keyword id="KW-0963">Cytoplasm</keyword>
<keyword id="KW-0206">Cytoskeleton</keyword>
<keyword id="KW-0254">Endocytosis</keyword>
<keyword id="KW-0967">Endosome</keyword>
<keyword id="KW-0472">Membrane</keyword>
<keyword id="KW-1185">Reference proteome</keyword>
<keyword id="KW-0677">Repeat</keyword>
<feature type="chain" id="PRO_0000349475" description="Actin cytoskeleton-regulatory complex protein PAN1">
    <location>
        <begin position="1"/>
        <end position="1449"/>
    </location>
</feature>
<feature type="domain" description="EH 1" evidence="3">
    <location>
        <begin position="128"/>
        <end position="217"/>
    </location>
</feature>
<feature type="domain" description="EF-hand 1" evidence="5">
    <location>
        <begin position="161"/>
        <end position="196"/>
    </location>
</feature>
<feature type="domain" description="EH 2" evidence="3">
    <location>
        <begin position="480"/>
        <end position="569"/>
    </location>
</feature>
<feature type="domain" description="EF-hand 2" evidence="5">
    <location>
        <begin position="513"/>
        <end position="548"/>
    </location>
</feature>
<feature type="domain" description="WH2" evidence="4">
    <location>
        <begin position="1415"/>
        <end position="1432"/>
    </location>
</feature>
<feature type="region of interest" description="Disordered" evidence="6">
    <location>
        <begin position="1"/>
        <end position="86"/>
    </location>
</feature>
<feature type="region of interest" description="Disordered" evidence="6">
    <location>
        <begin position="239"/>
        <end position="366"/>
    </location>
</feature>
<feature type="region of interest" description="Disordered" evidence="6">
    <location>
        <begin position="386"/>
        <end position="427"/>
    </location>
</feature>
<feature type="region of interest" description="Disordered" evidence="6">
    <location>
        <begin position="579"/>
        <end position="638"/>
    </location>
</feature>
<feature type="region of interest" description="Disordered" evidence="6">
    <location>
        <begin position="877"/>
        <end position="935"/>
    </location>
</feature>
<feature type="region of interest" description="Disordered" evidence="6">
    <location>
        <begin position="956"/>
        <end position="1418"/>
    </location>
</feature>
<feature type="coiled-coil region" evidence="2">
    <location>
        <begin position="1050"/>
        <end position="1108"/>
    </location>
</feature>
<feature type="compositionally biased region" description="Low complexity" evidence="6">
    <location>
        <begin position="1"/>
        <end position="18"/>
    </location>
</feature>
<feature type="compositionally biased region" description="Low complexity" evidence="6">
    <location>
        <begin position="27"/>
        <end position="36"/>
    </location>
</feature>
<feature type="compositionally biased region" description="Polar residues" evidence="6">
    <location>
        <begin position="49"/>
        <end position="86"/>
    </location>
</feature>
<feature type="compositionally biased region" description="Polar residues" evidence="6">
    <location>
        <begin position="239"/>
        <end position="249"/>
    </location>
</feature>
<feature type="compositionally biased region" description="Polar residues" evidence="6">
    <location>
        <begin position="258"/>
        <end position="275"/>
    </location>
</feature>
<feature type="compositionally biased region" description="Polar residues" evidence="6">
    <location>
        <begin position="296"/>
        <end position="306"/>
    </location>
</feature>
<feature type="compositionally biased region" description="Polar residues" evidence="6">
    <location>
        <begin position="323"/>
        <end position="353"/>
    </location>
</feature>
<feature type="compositionally biased region" description="Low complexity" evidence="6">
    <location>
        <begin position="386"/>
        <end position="397"/>
    </location>
</feature>
<feature type="compositionally biased region" description="Polar residues" evidence="6">
    <location>
        <begin position="398"/>
        <end position="422"/>
    </location>
</feature>
<feature type="compositionally biased region" description="Polar residues" evidence="6">
    <location>
        <begin position="579"/>
        <end position="588"/>
    </location>
</feature>
<feature type="compositionally biased region" description="Basic and acidic residues" evidence="6">
    <location>
        <begin position="595"/>
        <end position="606"/>
    </location>
</feature>
<feature type="compositionally biased region" description="Low complexity" evidence="6">
    <location>
        <begin position="878"/>
        <end position="888"/>
    </location>
</feature>
<feature type="compositionally biased region" description="Polar residues" evidence="6">
    <location>
        <begin position="889"/>
        <end position="907"/>
    </location>
</feature>
<feature type="compositionally biased region" description="Polar residues" evidence="6">
    <location>
        <begin position="914"/>
        <end position="926"/>
    </location>
</feature>
<feature type="compositionally biased region" description="Polar residues" evidence="6">
    <location>
        <begin position="959"/>
        <end position="986"/>
    </location>
</feature>
<feature type="compositionally biased region" description="Low complexity" evidence="6">
    <location>
        <begin position="996"/>
        <end position="1009"/>
    </location>
</feature>
<feature type="compositionally biased region" description="Low complexity" evidence="6">
    <location>
        <begin position="1016"/>
        <end position="1026"/>
    </location>
</feature>
<feature type="compositionally biased region" description="Polar residues" evidence="6">
    <location>
        <begin position="1027"/>
        <end position="1036"/>
    </location>
</feature>
<feature type="compositionally biased region" description="Acidic residues" evidence="6">
    <location>
        <begin position="1048"/>
        <end position="1058"/>
    </location>
</feature>
<feature type="compositionally biased region" description="Basic and acidic residues" evidence="6">
    <location>
        <begin position="1064"/>
        <end position="1073"/>
    </location>
</feature>
<feature type="compositionally biased region" description="Basic and acidic residues" evidence="6">
    <location>
        <begin position="1082"/>
        <end position="1104"/>
    </location>
</feature>
<feature type="compositionally biased region" description="Acidic residues" evidence="6">
    <location>
        <begin position="1105"/>
        <end position="1114"/>
    </location>
</feature>
<feature type="compositionally biased region" description="Low complexity" evidence="6">
    <location>
        <begin position="1118"/>
        <end position="1134"/>
    </location>
</feature>
<feature type="compositionally biased region" description="Low complexity" evidence="6">
    <location>
        <begin position="1174"/>
        <end position="1185"/>
    </location>
</feature>
<feature type="compositionally biased region" description="Basic and acidic residues" evidence="6">
    <location>
        <begin position="1192"/>
        <end position="1203"/>
    </location>
</feature>
<feature type="compositionally biased region" description="Acidic residues" evidence="6">
    <location>
        <begin position="1219"/>
        <end position="1231"/>
    </location>
</feature>
<feature type="compositionally biased region" description="Polar residues" evidence="6">
    <location>
        <begin position="1253"/>
        <end position="1263"/>
    </location>
</feature>
<feature type="compositionally biased region" description="Basic and acidic residues" evidence="6">
    <location>
        <begin position="1264"/>
        <end position="1283"/>
    </location>
</feature>
<feature type="compositionally biased region" description="Polar residues" evidence="6">
    <location>
        <begin position="1284"/>
        <end position="1295"/>
    </location>
</feature>
<feature type="compositionally biased region" description="Pro residues" evidence="6">
    <location>
        <begin position="1325"/>
        <end position="1395"/>
    </location>
</feature>
<organism>
    <name type="scientific">Debaryomyces hansenii (strain ATCC 36239 / CBS 767 / BCRC 21394 / JCM 1990 / NBRC 0083 / IGC 2968)</name>
    <name type="common">Yeast</name>
    <name type="synonym">Torulaspora hansenii</name>
    <dbReference type="NCBI Taxonomy" id="284592"/>
    <lineage>
        <taxon>Eukaryota</taxon>
        <taxon>Fungi</taxon>
        <taxon>Dikarya</taxon>
        <taxon>Ascomycota</taxon>
        <taxon>Saccharomycotina</taxon>
        <taxon>Pichiomycetes</taxon>
        <taxon>Debaryomycetaceae</taxon>
        <taxon>Debaryomyces</taxon>
    </lineage>
</organism>
<sequence length="1449" mass="157583">MYNPYQQQQAAYNPQQQQTGFAGGFNQQQQYVQPQQTGYYNPNQPPSLPNQATGFYQPQQQGMFNASSFQNQPTGFAQQPSIQPQQTGYVQTQPTGFQQPGTNSAPTVTENSELKIPSMRLSFITAADQSKFEHLFRTAVPKGEQAISGDSARDILLRSGLQPITLAEIWSLADTNKSGSLLFPEFALALHLCNLSLKGDPLPTMLPEKWSNEVKSFVDAISFSVPENPANILSNTPFASSGASSNPINNDWMAPQATGFNNSGAVPSTSFQAQPTGFGASQEMMAQRTGNPPLPQQATGFGSNNVAPLLPQRTGGGTLIPLQPQQTSNLIPAQKTGPLQPQTTGFQTQNPHQTGPGALQPQSTGFAQRMNNGPLQAQTTGFQQQTTGFQPQSTGFQPQSTGFQPQSTGFQPQQTGPLQAQPTGKPGQWGFVSTPTGGIPGMNAMEQHFLPSSQLPTNNLQNAMGGSLKTNVTWSITKQEKQIYDGVFSAWDSRNKGFIDGEVAINIFGKSGLARPDLESIWNLADTNNRGKLNKDEFAVAMHLVYRRLNGFDLPLRLPPELVPPSTKHIQDSMDTLKNSLKSGSAKSSPPVKPGKTDGKRYKNDDSNFGYVSNVRHRKKNVSNNDSSNGDEKPSHNSDLTIADLKKLVREKKILLDAVDAEDQDAAISNRQMESRNYQEIDSLKQQIRKIQSQLNDNVSSSGSIGERKQLMDKLNYLTRDKVPGLISKIHQVNKDIATSKVELFKLKLSKENPDWQPEDAEAGIVGTGVNGEVTDADRQKFKSKQLLKQRMAALTGKSHGSGNELDVKLHQEIKNTRSEGEIQSGMINDIEASIKDLEDGCAANLQVTNKEEVGTDKWENGNNLNEEVAKFVRELNSSKPKQQSSSQVNSTLSQGQPQTQPQSNNVEAGIVSPQVTGASDSSTASHEYRTPEERSAYIKAQAEKRMNERLAKLGLTRHMTSGSSSTIEQQTQNKTTSLYANSETSKNAERKLESQPEYQQQQQQQQQQQPPPPQRQQSQQEAQLQDKGTNGQPDSPRQVGQKPTEIMDNESDDDNEEYVALMKKKEEMEARERKRKLKKKQDKEARLEKLKREMEELKKKEEAGDSSDDEEPITEVASYGPSGSASKSSTTKSIEQPIVEEKTNEEQIAAPVVEADTFVPKTHDNNPFARIQNNSSTPGSNNGSKDNLFFKPEKEVKLDPKKAAAQRASQRGLGDFNDWSDEEENSSEDEGPNRAGAAQLASLLFGGMSQPVPKSSTVTPNQEFHDAEDIPHFDSQESKENNNGEYTSQPTSVIQEKPDAIDSTSEAQVKSIPVEVEAPSPDNFTPPPPPPPSNIPPLPNTSAPPPPPPPPPPMDTPPIPSSSAPPPPPPPPGAAPPLPNASVPPPPRGAPPLPGDSSLSSGTKQAPPSGGNVDIGALLGQIKTGSSLKKVDENEKRIADGAVVGRVL</sequence>
<gene>
    <name type="primary">PAN1</name>
    <name type="ordered locus">DEHA2E20856g</name>
</gene>